<feature type="chain" id="PRO_1000025185" description="Glutamate--cysteine ligase">
    <location>
        <begin position="1"/>
        <end position="530"/>
    </location>
</feature>
<organism>
    <name type="scientific">Saccharophagus degradans (strain 2-40 / ATCC 43961 / DSM 17024)</name>
    <dbReference type="NCBI Taxonomy" id="203122"/>
    <lineage>
        <taxon>Bacteria</taxon>
        <taxon>Pseudomonadati</taxon>
        <taxon>Pseudomonadota</taxon>
        <taxon>Gammaproteobacteria</taxon>
        <taxon>Cellvibrionales</taxon>
        <taxon>Cellvibrionaceae</taxon>
        <taxon>Saccharophagus</taxon>
    </lineage>
</organism>
<dbReference type="EC" id="6.3.2.2" evidence="1"/>
<dbReference type="EMBL" id="CP000282">
    <property type="protein sequence ID" value="ABD82838.1"/>
    <property type="molecule type" value="Genomic_DNA"/>
</dbReference>
<dbReference type="RefSeq" id="WP_011470053.1">
    <property type="nucleotide sequence ID" value="NC_007912.1"/>
</dbReference>
<dbReference type="SMR" id="Q21EP1"/>
<dbReference type="STRING" id="203122.Sde_3583"/>
<dbReference type="GeneID" id="98615194"/>
<dbReference type="KEGG" id="sde:Sde_3583"/>
<dbReference type="eggNOG" id="COG2918">
    <property type="taxonomic scope" value="Bacteria"/>
</dbReference>
<dbReference type="HOGENOM" id="CLU_020728_3_0_6"/>
<dbReference type="OrthoDB" id="9803907at2"/>
<dbReference type="UniPathway" id="UPA00142">
    <property type="reaction ID" value="UER00209"/>
</dbReference>
<dbReference type="Proteomes" id="UP000001947">
    <property type="component" value="Chromosome"/>
</dbReference>
<dbReference type="GO" id="GO:0005829">
    <property type="term" value="C:cytosol"/>
    <property type="evidence" value="ECO:0007669"/>
    <property type="project" value="TreeGrafter"/>
</dbReference>
<dbReference type="GO" id="GO:0005524">
    <property type="term" value="F:ATP binding"/>
    <property type="evidence" value="ECO:0007669"/>
    <property type="project" value="UniProtKB-KW"/>
</dbReference>
<dbReference type="GO" id="GO:0004357">
    <property type="term" value="F:glutamate-cysteine ligase activity"/>
    <property type="evidence" value="ECO:0007669"/>
    <property type="project" value="UniProtKB-UniRule"/>
</dbReference>
<dbReference type="GO" id="GO:0046872">
    <property type="term" value="F:metal ion binding"/>
    <property type="evidence" value="ECO:0007669"/>
    <property type="project" value="TreeGrafter"/>
</dbReference>
<dbReference type="GO" id="GO:0006750">
    <property type="term" value="P:glutathione biosynthetic process"/>
    <property type="evidence" value="ECO:0007669"/>
    <property type="project" value="UniProtKB-UniRule"/>
</dbReference>
<dbReference type="Gene3D" id="3.30.590.20">
    <property type="match status" value="1"/>
</dbReference>
<dbReference type="HAMAP" id="MF_00578">
    <property type="entry name" value="Glu_cys_ligase"/>
    <property type="match status" value="1"/>
</dbReference>
<dbReference type="InterPro" id="IPR014746">
    <property type="entry name" value="Gln_synth/guanido_kin_cat_dom"/>
</dbReference>
<dbReference type="InterPro" id="IPR007370">
    <property type="entry name" value="Glu_cys_ligase"/>
</dbReference>
<dbReference type="InterPro" id="IPR006334">
    <property type="entry name" value="Glut_cys_ligase"/>
</dbReference>
<dbReference type="NCBIfam" id="TIGR01434">
    <property type="entry name" value="glu_cys_ligase"/>
    <property type="match status" value="1"/>
</dbReference>
<dbReference type="PANTHER" id="PTHR38761">
    <property type="entry name" value="GLUTAMATE--CYSTEINE LIGASE"/>
    <property type="match status" value="1"/>
</dbReference>
<dbReference type="PANTHER" id="PTHR38761:SF1">
    <property type="entry name" value="GLUTAMATE--CYSTEINE LIGASE"/>
    <property type="match status" value="1"/>
</dbReference>
<dbReference type="Pfam" id="PF04262">
    <property type="entry name" value="Glu_cys_ligase"/>
    <property type="match status" value="1"/>
</dbReference>
<dbReference type="SUPFAM" id="SSF55931">
    <property type="entry name" value="Glutamine synthetase/guanido kinase"/>
    <property type="match status" value="1"/>
</dbReference>
<reference key="1">
    <citation type="journal article" date="2008" name="PLoS Genet.">
        <title>Complete genome sequence of the complex carbohydrate-degrading marine bacterium, Saccharophagus degradans strain 2-40 T.</title>
        <authorList>
            <person name="Weiner R.M."/>
            <person name="Taylor L.E. II"/>
            <person name="Henrissat B."/>
            <person name="Hauser L."/>
            <person name="Land M."/>
            <person name="Coutinho P.M."/>
            <person name="Rancurel C."/>
            <person name="Saunders E.H."/>
            <person name="Longmire A.G."/>
            <person name="Zhang H."/>
            <person name="Bayer E.A."/>
            <person name="Gilbert H.J."/>
            <person name="Larimer F."/>
            <person name="Zhulin I.B."/>
            <person name="Ekborg N.A."/>
            <person name="Lamed R."/>
            <person name="Richardson P.M."/>
            <person name="Borovok I."/>
            <person name="Hutcheson S."/>
        </authorList>
    </citation>
    <scope>NUCLEOTIDE SEQUENCE [LARGE SCALE GENOMIC DNA]</scope>
    <source>
        <strain>2-40 / ATCC 43961 / DSM 17024</strain>
    </source>
</reference>
<name>GSH1_SACD2</name>
<sequence length="530" mass="60265">MYEIQSFHAGLYDSKNAPVLTGIMRGIEREGLRIDRDGKLAQTPHPVALGSALTHPQITTDFSEALLEFITPPTHRVEDLFKQLYDIQGYTLSKLDDELIWSSSMPCVLNDDATIPVAQYGSSNNGTMKTVYRVGLGHRYGRAMQTVAGLHYNFSLPDAFWSFLHREEYSLLDLQDFKDQKYFALIRNFRRYYWLLVYLFGASPALCGSFIKGREHNLQPLIDERTLHLPYATSLRMGDLGYQSSAQESLYVCYNDKQSYITTLCAAITTPIDEYKAIGLQDEKGEFKQLNTSLLQIENEFYSSIRPKRTAKHGETALSALRNRGVEYIEVRCLDIDPFDPLGVNKPQVRFLDTFLLYCALQDSPDTSPEESANILRNQKTVVTEGRSPKALIESFTKGKIPLKQAGEALIKAMRPVAELLDIAHETEEHTQSLETQLAAILNPELTPSARIISHLSAKKLPYAHYALAQSRHHHETLLAKKPSNNTMQQFEKMAAESLDKQTRLEQKNSGNFSEFLQEYYKQYQMCCDK</sequence>
<keyword id="KW-0067">ATP-binding</keyword>
<keyword id="KW-0317">Glutathione biosynthesis</keyword>
<keyword id="KW-0436">Ligase</keyword>
<keyword id="KW-0547">Nucleotide-binding</keyword>
<keyword id="KW-1185">Reference proteome</keyword>
<comment type="catalytic activity">
    <reaction evidence="1">
        <text>L-cysteine + L-glutamate + ATP = gamma-L-glutamyl-L-cysteine + ADP + phosphate + H(+)</text>
        <dbReference type="Rhea" id="RHEA:13285"/>
        <dbReference type="ChEBI" id="CHEBI:15378"/>
        <dbReference type="ChEBI" id="CHEBI:29985"/>
        <dbReference type="ChEBI" id="CHEBI:30616"/>
        <dbReference type="ChEBI" id="CHEBI:35235"/>
        <dbReference type="ChEBI" id="CHEBI:43474"/>
        <dbReference type="ChEBI" id="CHEBI:58173"/>
        <dbReference type="ChEBI" id="CHEBI:456216"/>
        <dbReference type="EC" id="6.3.2.2"/>
    </reaction>
</comment>
<comment type="pathway">
    <text evidence="1">Sulfur metabolism; glutathione biosynthesis; glutathione from L-cysteine and L-glutamate: step 1/2.</text>
</comment>
<comment type="similarity">
    <text evidence="1">Belongs to the glutamate--cysteine ligase type 1 family. Type 1 subfamily.</text>
</comment>
<gene>
    <name evidence="1" type="primary">gshA</name>
    <name type="ordered locus">Sde_3583</name>
</gene>
<accession>Q21EP1</accession>
<protein>
    <recommendedName>
        <fullName evidence="1">Glutamate--cysteine ligase</fullName>
        <ecNumber evidence="1">6.3.2.2</ecNumber>
    </recommendedName>
    <alternativeName>
        <fullName evidence="1">Gamma-ECS</fullName>
        <shortName evidence="1">GCS</shortName>
    </alternativeName>
    <alternativeName>
        <fullName evidence="1">Gamma-glutamylcysteine synthetase</fullName>
    </alternativeName>
</protein>
<evidence type="ECO:0000255" key="1">
    <source>
        <dbReference type="HAMAP-Rule" id="MF_00578"/>
    </source>
</evidence>
<proteinExistence type="inferred from homology"/>